<sequence length="411" mass="46972">MEAETSWTNYPYSYITYVPEAESYREQSDDEAKVETFSMDSLLPDDLLERILSFLPIASIFRAGTVCKRWNEIVSSRRFLCNFSNNSVSQRPWYFMFTTTDDPSGYAYDPIIRKWYSFDLPCIETSNWFVASSCGLVCFMDNDCRNKIYVSNPITKQWRTLIEPPGHKSTDYTAMSTSVNRANQAVNRANRSYSVSIVKSKQVPGNFFQWDLSIHLYSSETMTWTTLVNDVLSGWRGGNESVICNNVLYFMIYSTGGSDHRHGLIASNLSSIGSPSSGILMRSFIPMPCSLTCGRLMNLRERLVIVGGIGKHDRPEVIKGIGIWVLKGKEWVEMAKMPQRFFQGFGEFDEVFASSGTDDLVYIQSYGSPALLTFDMNLKYWRWSQKCPVTKKFPLQLFTGFCFEPRLEIAP</sequence>
<dbReference type="EMBL" id="AL132962">
    <property type="protein sequence ID" value="CAB71089.1"/>
    <property type="molecule type" value="Genomic_DNA"/>
</dbReference>
<dbReference type="EMBL" id="CP002686">
    <property type="protein sequence ID" value="AEE80227.1"/>
    <property type="molecule type" value="Genomic_DNA"/>
</dbReference>
<dbReference type="EMBL" id="AF386994">
    <property type="protein sequence ID" value="AAK62439.1"/>
    <property type="molecule type" value="mRNA"/>
</dbReference>
<dbReference type="EMBL" id="BT000054">
    <property type="protein sequence ID" value="AAN15373.1"/>
    <property type="molecule type" value="mRNA"/>
</dbReference>
<dbReference type="PIR" id="T47951">
    <property type="entry name" value="T47951"/>
</dbReference>
<dbReference type="SMR" id="Q9M310"/>
<dbReference type="BioGRID" id="10646">
    <property type="interactions" value="11"/>
</dbReference>
<dbReference type="FunCoup" id="Q9M310">
    <property type="interactions" value="494"/>
</dbReference>
<dbReference type="IntAct" id="Q9M310">
    <property type="interactions" value="14"/>
</dbReference>
<dbReference type="STRING" id="3702.Q9M310"/>
<dbReference type="PaxDb" id="3702-AT3G61590.1"/>
<dbReference type="ProteomicsDB" id="230906"/>
<dbReference type="EnsemblPlants" id="AT3G61590.1">
    <property type="protein sequence ID" value="AT3G61590.1"/>
    <property type="gene ID" value="AT3G61590"/>
</dbReference>
<dbReference type="Gramene" id="AT3G61590.1">
    <property type="protein sequence ID" value="AT3G61590.1"/>
    <property type="gene ID" value="AT3G61590"/>
</dbReference>
<dbReference type="KEGG" id="ath:AT3G61590"/>
<dbReference type="Araport" id="AT3G61590"/>
<dbReference type="TAIR" id="AT3G61590">
    <property type="gene designation" value="HWS"/>
</dbReference>
<dbReference type="eggNOG" id="ENOG502QUHY">
    <property type="taxonomic scope" value="Eukaryota"/>
</dbReference>
<dbReference type="HOGENOM" id="CLU_038778_3_0_1"/>
<dbReference type="InParanoid" id="Q9M310"/>
<dbReference type="PhylomeDB" id="Q9M310"/>
<dbReference type="UniPathway" id="UPA00143"/>
<dbReference type="PRO" id="PR:Q9M310"/>
<dbReference type="Proteomes" id="UP000006548">
    <property type="component" value="Chromosome 3"/>
</dbReference>
<dbReference type="ExpressionAtlas" id="Q9M310">
    <property type="expression patterns" value="baseline and differential"/>
</dbReference>
<dbReference type="GO" id="GO:0004842">
    <property type="term" value="F:ubiquitin-protein transferase activity"/>
    <property type="evidence" value="ECO:0000250"/>
    <property type="project" value="TAIR"/>
</dbReference>
<dbReference type="GO" id="GO:0035195">
    <property type="term" value="P:miRNA-mediated post-transcriptional gene silencing"/>
    <property type="evidence" value="ECO:0000315"/>
    <property type="project" value="TAIR"/>
</dbReference>
<dbReference type="GO" id="GO:0099402">
    <property type="term" value="P:plant organ development"/>
    <property type="evidence" value="ECO:0000315"/>
    <property type="project" value="TAIR"/>
</dbReference>
<dbReference type="GO" id="GO:0016567">
    <property type="term" value="P:protein ubiquitination"/>
    <property type="evidence" value="ECO:0007669"/>
    <property type="project" value="UniProtKB-UniPathway"/>
</dbReference>
<dbReference type="CDD" id="cd22157">
    <property type="entry name" value="F-box_AtFBW1-like"/>
    <property type="match status" value="1"/>
</dbReference>
<dbReference type="FunFam" id="1.20.1280.50:FF:000030">
    <property type="entry name" value="F-box/kelch-repeat protein At3g61590"/>
    <property type="match status" value="1"/>
</dbReference>
<dbReference type="Gene3D" id="1.20.1280.50">
    <property type="match status" value="1"/>
</dbReference>
<dbReference type="Gene3D" id="2.120.10.80">
    <property type="entry name" value="Kelch-type beta propeller"/>
    <property type="match status" value="1"/>
</dbReference>
<dbReference type="InterPro" id="IPR056592">
    <property type="entry name" value="At3g26010-like_b-prop"/>
</dbReference>
<dbReference type="InterPro" id="IPR036047">
    <property type="entry name" value="F-box-like_dom_sf"/>
</dbReference>
<dbReference type="InterPro" id="IPR001810">
    <property type="entry name" value="F-box_dom"/>
</dbReference>
<dbReference type="InterPro" id="IPR045048">
    <property type="entry name" value="FBXO31/39"/>
</dbReference>
<dbReference type="InterPro" id="IPR015915">
    <property type="entry name" value="Kelch-typ_b-propeller"/>
</dbReference>
<dbReference type="InterPro" id="IPR011498">
    <property type="entry name" value="Kelch_2"/>
</dbReference>
<dbReference type="PANTHER" id="PTHR10706">
    <property type="entry name" value="F-BOX FAMILY PROTEIN"/>
    <property type="match status" value="1"/>
</dbReference>
<dbReference type="PANTHER" id="PTHR10706:SF130">
    <property type="entry name" value="F-BOX ONLY PROTEIN 31"/>
    <property type="match status" value="1"/>
</dbReference>
<dbReference type="Pfam" id="PF24750">
    <property type="entry name" value="b-prop_At3g26010-like"/>
    <property type="match status" value="1"/>
</dbReference>
<dbReference type="Pfam" id="PF00646">
    <property type="entry name" value="F-box"/>
    <property type="match status" value="1"/>
</dbReference>
<dbReference type="Pfam" id="PF07646">
    <property type="entry name" value="Kelch_2"/>
    <property type="match status" value="1"/>
</dbReference>
<dbReference type="SMART" id="SM00256">
    <property type="entry name" value="FBOX"/>
    <property type="match status" value="1"/>
</dbReference>
<dbReference type="SUPFAM" id="SSF81383">
    <property type="entry name" value="F-box domain"/>
    <property type="match status" value="1"/>
</dbReference>
<dbReference type="SUPFAM" id="SSF117281">
    <property type="entry name" value="Kelch motif"/>
    <property type="match status" value="1"/>
</dbReference>
<dbReference type="PROSITE" id="PS50181">
    <property type="entry name" value="FBOX"/>
    <property type="match status" value="1"/>
</dbReference>
<proteinExistence type="evidence at protein level"/>
<accession>Q9M310</accession>
<feature type="chain" id="PRO_0000283237" description="F-box/kelch-repeat protein At3g61590">
    <location>
        <begin position="1"/>
        <end position="411"/>
    </location>
</feature>
<feature type="domain" description="F-box" evidence="2">
    <location>
        <begin position="37"/>
        <end position="83"/>
    </location>
</feature>
<feature type="repeat" description="Kelch 1">
    <location>
        <begin position="81"/>
        <end position="135"/>
    </location>
</feature>
<feature type="repeat" description="Kelch 2">
    <location>
        <begin position="137"/>
        <end position="178"/>
    </location>
</feature>
<feature type="repeat" description="Kelch 3">
    <location>
        <begin position="196"/>
        <end position="246"/>
    </location>
</feature>
<feature type="repeat" description="Kelch 4">
    <location>
        <begin position="251"/>
        <end position="299"/>
    </location>
</feature>
<feature type="repeat" description="Kelch 5">
    <location>
        <begin position="302"/>
        <end position="350"/>
    </location>
</feature>
<feature type="repeat" description="Kelch 6">
    <location>
        <begin position="352"/>
        <end position="401"/>
    </location>
</feature>
<reference key="1">
    <citation type="journal article" date="2000" name="Nature">
        <title>Sequence and analysis of chromosome 3 of the plant Arabidopsis thaliana.</title>
        <authorList>
            <person name="Salanoubat M."/>
            <person name="Lemcke K."/>
            <person name="Rieger M."/>
            <person name="Ansorge W."/>
            <person name="Unseld M."/>
            <person name="Fartmann B."/>
            <person name="Valle G."/>
            <person name="Bloecker H."/>
            <person name="Perez-Alonso M."/>
            <person name="Obermaier B."/>
            <person name="Delseny M."/>
            <person name="Boutry M."/>
            <person name="Grivell L.A."/>
            <person name="Mache R."/>
            <person name="Puigdomenech P."/>
            <person name="De Simone V."/>
            <person name="Choisne N."/>
            <person name="Artiguenave F."/>
            <person name="Robert C."/>
            <person name="Brottier P."/>
            <person name="Wincker P."/>
            <person name="Cattolico L."/>
            <person name="Weissenbach J."/>
            <person name="Saurin W."/>
            <person name="Quetier F."/>
            <person name="Schaefer M."/>
            <person name="Mueller-Auer S."/>
            <person name="Gabel C."/>
            <person name="Fuchs M."/>
            <person name="Benes V."/>
            <person name="Wurmbach E."/>
            <person name="Drzonek H."/>
            <person name="Erfle H."/>
            <person name="Jordan N."/>
            <person name="Bangert S."/>
            <person name="Wiedelmann R."/>
            <person name="Kranz H."/>
            <person name="Voss H."/>
            <person name="Holland R."/>
            <person name="Brandt P."/>
            <person name="Nyakatura G."/>
            <person name="Vezzi A."/>
            <person name="D'Angelo M."/>
            <person name="Pallavicini A."/>
            <person name="Toppo S."/>
            <person name="Simionati B."/>
            <person name="Conrad A."/>
            <person name="Hornischer K."/>
            <person name="Kauer G."/>
            <person name="Loehnert T.-H."/>
            <person name="Nordsiek G."/>
            <person name="Reichelt J."/>
            <person name="Scharfe M."/>
            <person name="Schoen O."/>
            <person name="Bargues M."/>
            <person name="Terol J."/>
            <person name="Climent J."/>
            <person name="Navarro P."/>
            <person name="Collado C."/>
            <person name="Perez-Perez A."/>
            <person name="Ottenwaelder B."/>
            <person name="Duchemin D."/>
            <person name="Cooke R."/>
            <person name="Laudie M."/>
            <person name="Berger-Llauro C."/>
            <person name="Purnelle B."/>
            <person name="Masuy D."/>
            <person name="de Haan M."/>
            <person name="Maarse A.C."/>
            <person name="Alcaraz J.-P."/>
            <person name="Cottet A."/>
            <person name="Casacuberta E."/>
            <person name="Monfort A."/>
            <person name="Argiriou A."/>
            <person name="Flores M."/>
            <person name="Liguori R."/>
            <person name="Vitale D."/>
            <person name="Mannhaupt G."/>
            <person name="Haase D."/>
            <person name="Schoof H."/>
            <person name="Rudd S."/>
            <person name="Zaccaria P."/>
            <person name="Mewes H.-W."/>
            <person name="Mayer K.F.X."/>
            <person name="Kaul S."/>
            <person name="Town C.D."/>
            <person name="Koo H.L."/>
            <person name="Tallon L.J."/>
            <person name="Jenkins J."/>
            <person name="Rooney T."/>
            <person name="Rizzo M."/>
            <person name="Walts A."/>
            <person name="Utterback T."/>
            <person name="Fujii C.Y."/>
            <person name="Shea T.P."/>
            <person name="Creasy T.H."/>
            <person name="Haas B."/>
            <person name="Maiti R."/>
            <person name="Wu D."/>
            <person name="Peterson J."/>
            <person name="Van Aken S."/>
            <person name="Pai G."/>
            <person name="Militscher J."/>
            <person name="Sellers P."/>
            <person name="Gill J.E."/>
            <person name="Feldblyum T.V."/>
            <person name="Preuss D."/>
            <person name="Lin X."/>
            <person name="Nierman W.C."/>
            <person name="Salzberg S.L."/>
            <person name="White O."/>
            <person name="Venter J.C."/>
            <person name="Fraser C.M."/>
            <person name="Kaneko T."/>
            <person name="Nakamura Y."/>
            <person name="Sato S."/>
            <person name="Kato T."/>
            <person name="Asamizu E."/>
            <person name="Sasamoto S."/>
            <person name="Kimura T."/>
            <person name="Idesawa K."/>
            <person name="Kawashima K."/>
            <person name="Kishida Y."/>
            <person name="Kiyokawa C."/>
            <person name="Kohara M."/>
            <person name="Matsumoto M."/>
            <person name="Matsuno A."/>
            <person name="Muraki A."/>
            <person name="Nakayama S."/>
            <person name="Nakazaki N."/>
            <person name="Shinpo S."/>
            <person name="Takeuchi C."/>
            <person name="Wada T."/>
            <person name="Watanabe A."/>
            <person name="Yamada M."/>
            <person name="Yasuda M."/>
            <person name="Tabata S."/>
        </authorList>
    </citation>
    <scope>NUCLEOTIDE SEQUENCE [LARGE SCALE GENOMIC DNA]</scope>
    <source>
        <strain>cv. Columbia</strain>
    </source>
</reference>
<reference key="2">
    <citation type="journal article" date="2017" name="Plant J.">
        <title>Araport11: a complete reannotation of the Arabidopsis thaliana reference genome.</title>
        <authorList>
            <person name="Cheng C.Y."/>
            <person name="Krishnakumar V."/>
            <person name="Chan A.P."/>
            <person name="Thibaud-Nissen F."/>
            <person name="Schobel S."/>
            <person name="Town C.D."/>
        </authorList>
    </citation>
    <scope>GENOME REANNOTATION</scope>
    <source>
        <strain>cv. Columbia</strain>
    </source>
</reference>
<reference key="3">
    <citation type="journal article" date="2003" name="Science">
        <title>Empirical analysis of transcriptional activity in the Arabidopsis genome.</title>
        <authorList>
            <person name="Yamada K."/>
            <person name="Lim J."/>
            <person name="Dale J.M."/>
            <person name="Chen H."/>
            <person name="Shinn P."/>
            <person name="Palm C.J."/>
            <person name="Southwick A.M."/>
            <person name="Wu H.C."/>
            <person name="Kim C.J."/>
            <person name="Nguyen M."/>
            <person name="Pham P.K."/>
            <person name="Cheuk R.F."/>
            <person name="Karlin-Newmann G."/>
            <person name="Liu S.X."/>
            <person name="Lam B."/>
            <person name="Sakano H."/>
            <person name="Wu T."/>
            <person name="Yu G."/>
            <person name="Miranda M."/>
            <person name="Quach H.L."/>
            <person name="Tripp M."/>
            <person name="Chang C.H."/>
            <person name="Lee J.M."/>
            <person name="Toriumi M.J."/>
            <person name="Chan M.M."/>
            <person name="Tang C.C."/>
            <person name="Onodera C.S."/>
            <person name="Deng J.M."/>
            <person name="Akiyama K."/>
            <person name="Ansari Y."/>
            <person name="Arakawa T."/>
            <person name="Banh J."/>
            <person name="Banno F."/>
            <person name="Bowser L."/>
            <person name="Brooks S.Y."/>
            <person name="Carninci P."/>
            <person name="Chao Q."/>
            <person name="Choy N."/>
            <person name="Enju A."/>
            <person name="Goldsmith A.D."/>
            <person name="Gurjal M."/>
            <person name="Hansen N.F."/>
            <person name="Hayashizaki Y."/>
            <person name="Johnson-Hopson C."/>
            <person name="Hsuan V.W."/>
            <person name="Iida K."/>
            <person name="Karnes M."/>
            <person name="Khan S."/>
            <person name="Koesema E."/>
            <person name="Ishida J."/>
            <person name="Jiang P.X."/>
            <person name="Jones T."/>
            <person name="Kawai J."/>
            <person name="Kamiya A."/>
            <person name="Meyers C."/>
            <person name="Nakajima M."/>
            <person name="Narusaka M."/>
            <person name="Seki M."/>
            <person name="Sakurai T."/>
            <person name="Satou M."/>
            <person name="Tamse R."/>
            <person name="Vaysberg M."/>
            <person name="Wallender E.K."/>
            <person name="Wong C."/>
            <person name="Yamamura Y."/>
            <person name="Yuan S."/>
            <person name="Shinozaki K."/>
            <person name="Davis R.W."/>
            <person name="Theologis A."/>
            <person name="Ecker J.R."/>
        </authorList>
    </citation>
    <scope>NUCLEOTIDE SEQUENCE [LARGE SCALE MRNA]</scope>
    <source>
        <strain>cv. Columbia</strain>
    </source>
</reference>
<reference key="4">
    <citation type="journal article" date="2004" name="Plant Cell Physiol.">
        <title>Expression and interaction analysis of Arabidopsis Skp1-related genes.</title>
        <authorList>
            <person name="Takahashi N."/>
            <person name="Kuroda H."/>
            <person name="Kuromori T."/>
            <person name="Hirayama T."/>
            <person name="Seki M."/>
            <person name="Shinozaki K."/>
            <person name="Shimada H."/>
            <person name="Matsui M."/>
        </authorList>
    </citation>
    <scope>INTERACTION WITH SKP1A/ASK1; SKP1B/ASK2; ASK3; ASK9; ASK11; ASK12; ASK13; ASK14; ASK16 AND ASK18</scope>
</reference>
<comment type="function">
    <text evidence="1">Component of SCF(ASK-cullin-F-box) E3 ubiquitin ligase complexes, which may mediate the ubiquitination and subsequent proteasomal degradation of target proteins.</text>
</comment>
<comment type="pathway">
    <text>Protein modification; protein ubiquitination.</text>
</comment>
<comment type="subunit">
    <text evidence="1 3">Part of a SCF (ASK-cullin-F-box) protein ligase complex (By similarity). Interacts with SKP1A/ASK1, SKP1B/ASK2, ASK3, ASK9, ASK11, ASK12, ASK13, ASK14, ASK16 and ASK18.</text>
</comment>
<comment type="domain">
    <text evidence="1">The F-box is necessary for the interaction with ASK proteins.</text>
</comment>
<keyword id="KW-0880">Kelch repeat</keyword>
<keyword id="KW-1185">Reference proteome</keyword>
<keyword id="KW-0677">Repeat</keyword>
<keyword id="KW-0833">Ubl conjugation pathway</keyword>
<organism>
    <name type="scientific">Arabidopsis thaliana</name>
    <name type="common">Mouse-ear cress</name>
    <dbReference type="NCBI Taxonomy" id="3702"/>
    <lineage>
        <taxon>Eukaryota</taxon>
        <taxon>Viridiplantae</taxon>
        <taxon>Streptophyta</taxon>
        <taxon>Embryophyta</taxon>
        <taxon>Tracheophyta</taxon>
        <taxon>Spermatophyta</taxon>
        <taxon>Magnoliopsida</taxon>
        <taxon>eudicotyledons</taxon>
        <taxon>Gunneridae</taxon>
        <taxon>Pentapetalae</taxon>
        <taxon>rosids</taxon>
        <taxon>malvids</taxon>
        <taxon>Brassicales</taxon>
        <taxon>Brassicaceae</taxon>
        <taxon>Camelineae</taxon>
        <taxon>Arabidopsis</taxon>
    </lineage>
</organism>
<gene>
    <name type="ordered locus">At3g61590</name>
    <name type="ORF">F2A19.190</name>
</gene>
<evidence type="ECO:0000250" key="1"/>
<evidence type="ECO:0000255" key="2">
    <source>
        <dbReference type="PROSITE-ProRule" id="PRU00080"/>
    </source>
</evidence>
<evidence type="ECO:0000269" key="3">
    <source>
    </source>
</evidence>
<protein>
    <recommendedName>
        <fullName>F-box/kelch-repeat protein At3g61590</fullName>
    </recommendedName>
</protein>
<name>FBK77_ARATH</name>